<reference key="1">
    <citation type="journal article" date="2006" name="Mol. Microbiol.">
        <title>Role of pathogenicity island-associated integrases in the genome plasticity of uropathogenic Escherichia coli strain 536.</title>
        <authorList>
            <person name="Hochhut B."/>
            <person name="Wilde C."/>
            <person name="Balling G."/>
            <person name="Middendorf B."/>
            <person name="Dobrindt U."/>
            <person name="Brzuszkiewicz E."/>
            <person name="Gottschalk G."/>
            <person name="Carniel E."/>
            <person name="Hacker J."/>
        </authorList>
    </citation>
    <scope>NUCLEOTIDE SEQUENCE [LARGE SCALE GENOMIC DNA]</scope>
    <source>
        <strain>536 / UPEC</strain>
    </source>
</reference>
<dbReference type="EMBL" id="CP000247">
    <property type="protein sequence ID" value="ABG70609.1"/>
    <property type="molecule type" value="Genomic_DNA"/>
</dbReference>
<dbReference type="RefSeq" id="WP_000162575.1">
    <property type="nucleotide sequence ID" value="NC_008253.1"/>
</dbReference>
<dbReference type="SMR" id="Q0TEM0"/>
<dbReference type="KEGG" id="ecp:ECP_2620"/>
<dbReference type="HOGENOM" id="CLU_108953_3_0_6"/>
<dbReference type="Proteomes" id="UP000009182">
    <property type="component" value="Chromosome"/>
</dbReference>
<dbReference type="GO" id="GO:0005829">
    <property type="term" value="C:cytosol"/>
    <property type="evidence" value="ECO:0007669"/>
    <property type="project" value="TreeGrafter"/>
</dbReference>
<dbReference type="GO" id="GO:0003723">
    <property type="term" value="F:RNA binding"/>
    <property type="evidence" value="ECO:0007669"/>
    <property type="project" value="UniProtKB-UniRule"/>
</dbReference>
<dbReference type="GO" id="GO:0070929">
    <property type="term" value="P:trans-translation"/>
    <property type="evidence" value="ECO:0007669"/>
    <property type="project" value="UniProtKB-UniRule"/>
</dbReference>
<dbReference type="CDD" id="cd09294">
    <property type="entry name" value="SmpB"/>
    <property type="match status" value="1"/>
</dbReference>
<dbReference type="FunFam" id="2.40.280.10:FF:000001">
    <property type="entry name" value="SsrA-binding protein"/>
    <property type="match status" value="1"/>
</dbReference>
<dbReference type="Gene3D" id="2.40.280.10">
    <property type="match status" value="1"/>
</dbReference>
<dbReference type="HAMAP" id="MF_00023">
    <property type="entry name" value="SmpB"/>
    <property type="match status" value="1"/>
</dbReference>
<dbReference type="InterPro" id="IPR023620">
    <property type="entry name" value="SmpB"/>
</dbReference>
<dbReference type="InterPro" id="IPR000037">
    <property type="entry name" value="SsrA-bd_prot"/>
</dbReference>
<dbReference type="InterPro" id="IPR020081">
    <property type="entry name" value="SsrA-bd_prot_CS"/>
</dbReference>
<dbReference type="NCBIfam" id="NF003843">
    <property type="entry name" value="PRK05422.1"/>
    <property type="match status" value="1"/>
</dbReference>
<dbReference type="NCBIfam" id="TIGR00086">
    <property type="entry name" value="smpB"/>
    <property type="match status" value="1"/>
</dbReference>
<dbReference type="PANTHER" id="PTHR30308:SF2">
    <property type="entry name" value="SSRA-BINDING PROTEIN"/>
    <property type="match status" value="1"/>
</dbReference>
<dbReference type="PANTHER" id="PTHR30308">
    <property type="entry name" value="TMRNA-BINDING COMPONENT OF TRANS-TRANSLATION TAGGING COMPLEX"/>
    <property type="match status" value="1"/>
</dbReference>
<dbReference type="Pfam" id="PF01668">
    <property type="entry name" value="SmpB"/>
    <property type="match status" value="1"/>
</dbReference>
<dbReference type="SUPFAM" id="SSF74982">
    <property type="entry name" value="Small protein B (SmpB)"/>
    <property type="match status" value="1"/>
</dbReference>
<dbReference type="PROSITE" id="PS01317">
    <property type="entry name" value="SSRP"/>
    <property type="match status" value="1"/>
</dbReference>
<feature type="chain" id="PRO_1000002047" description="SsrA-binding protein">
    <location>
        <begin position="1"/>
        <end position="160"/>
    </location>
</feature>
<accession>Q0TEM0</accession>
<proteinExistence type="inferred from homology"/>
<name>SSRP_ECOL5</name>
<keyword id="KW-0963">Cytoplasm</keyword>
<keyword id="KW-0694">RNA-binding</keyword>
<protein>
    <recommendedName>
        <fullName evidence="1">SsrA-binding protein</fullName>
    </recommendedName>
    <alternativeName>
        <fullName evidence="1">Small protein B</fullName>
    </alternativeName>
</protein>
<sequence>MTKKKAHKPGSATIALNKRARHEYFIEEEFEAGLALQGWEVKSLRAGKANISDSYVLLRDGEAFLFGANITPMAVASTHVVCDPTRTRKLLLNQRELDSLYGRVNREGYTVVALSLYWKNAWCKVKIGVAKGKKQHDKRSDIKEREWQVDKARIMKNSHR</sequence>
<evidence type="ECO:0000255" key="1">
    <source>
        <dbReference type="HAMAP-Rule" id="MF_00023"/>
    </source>
</evidence>
<organism>
    <name type="scientific">Escherichia coli O6:K15:H31 (strain 536 / UPEC)</name>
    <dbReference type="NCBI Taxonomy" id="362663"/>
    <lineage>
        <taxon>Bacteria</taxon>
        <taxon>Pseudomonadati</taxon>
        <taxon>Pseudomonadota</taxon>
        <taxon>Gammaproteobacteria</taxon>
        <taxon>Enterobacterales</taxon>
        <taxon>Enterobacteriaceae</taxon>
        <taxon>Escherichia</taxon>
    </lineage>
</organism>
<comment type="function">
    <text evidence="1">Required for rescue of stalled ribosomes mediated by trans-translation. Binds to transfer-messenger RNA (tmRNA), required for stable association of tmRNA with ribosomes. tmRNA and SmpB together mimic tRNA shape, replacing the anticodon stem-loop with SmpB. tmRNA is encoded by the ssrA gene; the 2 termini fold to resemble tRNA(Ala) and it encodes a 'tag peptide', a short internal open reading frame. During trans-translation Ala-aminoacylated tmRNA acts like a tRNA, entering the A-site of stalled ribosomes, displacing the stalled mRNA. The ribosome then switches to translate the ORF on the tmRNA; the nascent peptide is terminated with the 'tag peptide' encoded by the tmRNA and targeted for degradation. The ribosome is freed to recommence translation, which seems to be the essential function of trans-translation.</text>
</comment>
<comment type="subcellular location">
    <subcellularLocation>
        <location evidence="1">Cytoplasm</location>
    </subcellularLocation>
    <text evidence="1">The tmRNA-SmpB complex associates with stalled 70S ribosomes.</text>
</comment>
<comment type="similarity">
    <text evidence="1">Belongs to the SmpB family.</text>
</comment>
<gene>
    <name evidence="1" type="primary">smpB</name>
    <name type="ordered locus">ECP_2620</name>
</gene>